<name>SYFA_THET2</name>
<feature type="chain" id="PRO_0000126784" description="Phenylalanine--tRNA ligase alpha subunit">
    <location>
        <begin position="1"/>
        <end position="350"/>
    </location>
</feature>
<feature type="binding site" evidence="1">
    <location>
        <position position="262"/>
    </location>
    <ligand>
        <name>Mg(2+)</name>
        <dbReference type="ChEBI" id="CHEBI:18420"/>
        <note>shared with beta subunit</note>
    </ligand>
</feature>
<accession>Q72HA1</accession>
<proteinExistence type="inferred from homology"/>
<gene>
    <name evidence="1" type="primary">pheS</name>
    <name type="ordered locus">TT_C1594</name>
</gene>
<dbReference type="EC" id="6.1.1.20" evidence="1"/>
<dbReference type="EMBL" id="AE017221">
    <property type="protein sequence ID" value="AAS81936.1"/>
    <property type="molecule type" value="Genomic_DNA"/>
</dbReference>
<dbReference type="RefSeq" id="WP_011173965.1">
    <property type="nucleotide sequence ID" value="NC_005835.1"/>
</dbReference>
<dbReference type="SMR" id="Q72HA1"/>
<dbReference type="KEGG" id="tth:TT_C1594"/>
<dbReference type="eggNOG" id="COG0016">
    <property type="taxonomic scope" value="Bacteria"/>
</dbReference>
<dbReference type="HOGENOM" id="CLU_025086_0_1_0"/>
<dbReference type="OrthoDB" id="9800719at2"/>
<dbReference type="Proteomes" id="UP000000592">
    <property type="component" value="Chromosome"/>
</dbReference>
<dbReference type="GO" id="GO:0005737">
    <property type="term" value="C:cytoplasm"/>
    <property type="evidence" value="ECO:0007669"/>
    <property type="project" value="UniProtKB-SubCell"/>
</dbReference>
<dbReference type="GO" id="GO:0005524">
    <property type="term" value="F:ATP binding"/>
    <property type="evidence" value="ECO:0007669"/>
    <property type="project" value="UniProtKB-UniRule"/>
</dbReference>
<dbReference type="GO" id="GO:0000287">
    <property type="term" value="F:magnesium ion binding"/>
    <property type="evidence" value="ECO:0007669"/>
    <property type="project" value="UniProtKB-UniRule"/>
</dbReference>
<dbReference type="GO" id="GO:0004826">
    <property type="term" value="F:phenylalanine-tRNA ligase activity"/>
    <property type="evidence" value="ECO:0007669"/>
    <property type="project" value="UniProtKB-UniRule"/>
</dbReference>
<dbReference type="GO" id="GO:0000049">
    <property type="term" value="F:tRNA binding"/>
    <property type="evidence" value="ECO:0007669"/>
    <property type="project" value="InterPro"/>
</dbReference>
<dbReference type="GO" id="GO:0006432">
    <property type="term" value="P:phenylalanyl-tRNA aminoacylation"/>
    <property type="evidence" value="ECO:0007669"/>
    <property type="project" value="UniProtKB-UniRule"/>
</dbReference>
<dbReference type="CDD" id="cd00496">
    <property type="entry name" value="PheRS_alpha_core"/>
    <property type="match status" value="1"/>
</dbReference>
<dbReference type="Gene3D" id="3.30.930.10">
    <property type="entry name" value="Bira Bifunctional Protein, Domain 2"/>
    <property type="match status" value="1"/>
</dbReference>
<dbReference type="HAMAP" id="MF_00281">
    <property type="entry name" value="Phe_tRNA_synth_alpha1"/>
    <property type="match status" value="1"/>
</dbReference>
<dbReference type="InterPro" id="IPR006195">
    <property type="entry name" value="aa-tRNA-synth_II"/>
</dbReference>
<dbReference type="InterPro" id="IPR045864">
    <property type="entry name" value="aa-tRNA-synth_II/BPL/LPL"/>
</dbReference>
<dbReference type="InterPro" id="IPR004529">
    <property type="entry name" value="Phe-tRNA-synth_IIc_asu"/>
</dbReference>
<dbReference type="InterPro" id="IPR004188">
    <property type="entry name" value="Phe-tRNA_ligase_II_N"/>
</dbReference>
<dbReference type="InterPro" id="IPR022911">
    <property type="entry name" value="Phe_tRNA_ligase_alpha1_bac"/>
</dbReference>
<dbReference type="InterPro" id="IPR002319">
    <property type="entry name" value="Phenylalanyl-tRNA_Synthase"/>
</dbReference>
<dbReference type="InterPro" id="IPR010978">
    <property type="entry name" value="tRNA-bd_arm"/>
</dbReference>
<dbReference type="NCBIfam" id="TIGR00468">
    <property type="entry name" value="pheS"/>
    <property type="match status" value="1"/>
</dbReference>
<dbReference type="PANTHER" id="PTHR11538:SF41">
    <property type="entry name" value="PHENYLALANINE--TRNA LIGASE, MITOCHONDRIAL"/>
    <property type="match status" value="1"/>
</dbReference>
<dbReference type="PANTHER" id="PTHR11538">
    <property type="entry name" value="PHENYLALANYL-TRNA SYNTHETASE"/>
    <property type="match status" value="1"/>
</dbReference>
<dbReference type="Pfam" id="PF02912">
    <property type="entry name" value="Phe_tRNA-synt_N"/>
    <property type="match status" value="1"/>
</dbReference>
<dbReference type="Pfam" id="PF01409">
    <property type="entry name" value="tRNA-synt_2d"/>
    <property type="match status" value="1"/>
</dbReference>
<dbReference type="SUPFAM" id="SSF55681">
    <property type="entry name" value="Class II aaRS and biotin synthetases"/>
    <property type="match status" value="1"/>
</dbReference>
<dbReference type="SUPFAM" id="SSF46589">
    <property type="entry name" value="tRNA-binding arm"/>
    <property type="match status" value="1"/>
</dbReference>
<dbReference type="PROSITE" id="PS50862">
    <property type="entry name" value="AA_TRNA_LIGASE_II"/>
    <property type="match status" value="1"/>
</dbReference>
<organism>
    <name type="scientific">Thermus thermophilus (strain ATCC BAA-163 / DSM 7039 / HB27)</name>
    <dbReference type="NCBI Taxonomy" id="262724"/>
    <lineage>
        <taxon>Bacteria</taxon>
        <taxon>Thermotogati</taxon>
        <taxon>Deinococcota</taxon>
        <taxon>Deinococci</taxon>
        <taxon>Thermales</taxon>
        <taxon>Thermaceae</taxon>
        <taxon>Thermus</taxon>
    </lineage>
</organism>
<comment type="catalytic activity">
    <reaction evidence="1">
        <text>tRNA(Phe) + L-phenylalanine + ATP = L-phenylalanyl-tRNA(Phe) + AMP + diphosphate + H(+)</text>
        <dbReference type="Rhea" id="RHEA:19413"/>
        <dbReference type="Rhea" id="RHEA-COMP:9668"/>
        <dbReference type="Rhea" id="RHEA-COMP:9699"/>
        <dbReference type="ChEBI" id="CHEBI:15378"/>
        <dbReference type="ChEBI" id="CHEBI:30616"/>
        <dbReference type="ChEBI" id="CHEBI:33019"/>
        <dbReference type="ChEBI" id="CHEBI:58095"/>
        <dbReference type="ChEBI" id="CHEBI:78442"/>
        <dbReference type="ChEBI" id="CHEBI:78531"/>
        <dbReference type="ChEBI" id="CHEBI:456215"/>
        <dbReference type="EC" id="6.1.1.20"/>
    </reaction>
</comment>
<comment type="cofactor">
    <cofactor evidence="1">
        <name>Mg(2+)</name>
        <dbReference type="ChEBI" id="CHEBI:18420"/>
    </cofactor>
    <text evidence="1">Binds 2 magnesium ions per tetramer.</text>
</comment>
<comment type="subunit">
    <text evidence="1">Tetramer of two alpha and two beta subunits.</text>
</comment>
<comment type="subcellular location">
    <subcellularLocation>
        <location evidence="1">Cytoplasm</location>
    </subcellularLocation>
</comment>
<comment type="similarity">
    <text evidence="1">Belongs to the class-II aminoacyl-tRNA synthetase family. Phe-tRNA synthetase alpha subunit type 1 subfamily.</text>
</comment>
<evidence type="ECO:0000255" key="1">
    <source>
        <dbReference type="HAMAP-Rule" id="MF_00281"/>
    </source>
</evidence>
<reference key="1">
    <citation type="journal article" date="2004" name="Nat. Biotechnol.">
        <title>The genome sequence of the extreme thermophile Thermus thermophilus.</title>
        <authorList>
            <person name="Henne A."/>
            <person name="Brueggemann H."/>
            <person name="Raasch C."/>
            <person name="Wiezer A."/>
            <person name="Hartsch T."/>
            <person name="Liesegang H."/>
            <person name="Johann A."/>
            <person name="Lienard T."/>
            <person name="Gohl O."/>
            <person name="Martinez-Arias R."/>
            <person name="Jacobi C."/>
            <person name="Starkuviene V."/>
            <person name="Schlenczeck S."/>
            <person name="Dencker S."/>
            <person name="Huber R."/>
            <person name="Klenk H.-P."/>
            <person name="Kramer W."/>
            <person name="Merkl R."/>
            <person name="Gottschalk G."/>
            <person name="Fritz H.-J."/>
        </authorList>
    </citation>
    <scope>NUCLEOTIDE SEQUENCE [LARGE SCALE GENOMIC DNA]</scope>
    <source>
        <strain>ATCC BAA-163 / DSM 7039 / HB27</strain>
    </source>
</reference>
<keyword id="KW-0030">Aminoacyl-tRNA synthetase</keyword>
<keyword id="KW-0067">ATP-binding</keyword>
<keyword id="KW-0963">Cytoplasm</keyword>
<keyword id="KW-0436">Ligase</keyword>
<keyword id="KW-0460">Magnesium</keyword>
<keyword id="KW-0479">Metal-binding</keyword>
<keyword id="KW-0547">Nucleotide-binding</keyword>
<keyword id="KW-0648">Protein biosynthesis</keyword>
<sequence length="350" mass="39249">MLEEALAAIQNARDLEELKALKARYLGKKGLLTQEMKGLSALPLEERRKRGQELNAIKAALEAALEAREKALEEAALKEALERERVDVSLPGASLFSGGLHPITLMERELVEIFRALGYQAVEGPEVESEFFNFDALNIPEHHPARDMWDTFWLAGEGFRLEGPLGEEVEGRLLLRTHTSPMQVRYMVAHTPPFRIVVPGRVFRFEQTDATHEAVFHQLEGLVVGEGITMAHLKGAIYELAQALFGPDSKVRFQPVYFPFVEPGAQFAVWWPEGGKWLELGGAGMVHPKVFQAVDAYRERLGLPSAYRGVTGFAFGLGVERLAMLRYGIPDIRYFFGGRLKFLEQFKGVL</sequence>
<protein>
    <recommendedName>
        <fullName evidence="1">Phenylalanine--tRNA ligase alpha subunit</fullName>
        <ecNumber evidence="1">6.1.1.20</ecNumber>
    </recommendedName>
    <alternativeName>
        <fullName evidence="1">Phenylalanyl-tRNA synthetase alpha subunit</fullName>
        <shortName evidence="1">PheRS</shortName>
    </alternativeName>
</protein>